<dbReference type="EC" id="4.1.1.48"/>
<dbReference type="EMBL" id="AL445065">
    <property type="protein sequence ID" value="CAC11937.1"/>
    <property type="molecule type" value="Genomic_DNA"/>
</dbReference>
<dbReference type="RefSeq" id="WP_010901220.1">
    <property type="nucleotide sequence ID" value="NC_002578.1"/>
</dbReference>
<dbReference type="SMR" id="Q9HK02"/>
<dbReference type="FunCoup" id="Q9HK02">
    <property type="interactions" value="81"/>
</dbReference>
<dbReference type="STRING" id="273075.gene:9572022"/>
<dbReference type="PaxDb" id="273075-Ta0808"/>
<dbReference type="EnsemblBacteria" id="CAC11937">
    <property type="protein sequence ID" value="CAC11937"/>
    <property type="gene ID" value="CAC11937"/>
</dbReference>
<dbReference type="KEGG" id="tac:Ta0808"/>
<dbReference type="eggNOG" id="arCOG01088">
    <property type="taxonomic scope" value="Archaea"/>
</dbReference>
<dbReference type="HOGENOM" id="CLU_034247_0_1_2"/>
<dbReference type="InParanoid" id="Q9HK02"/>
<dbReference type="OrthoDB" id="15223at2157"/>
<dbReference type="UniPathway" id="UPA00035">
    <property type="reaction ID" value="UER00043"/>
</dbReference>
<dbReference type="Proteomes" id="UP000001024">
    <property type="component" value="Chromosome"/>
</dbReference>
<dbReference type="GO" id="GO:0004425">
    <property type="term" value="F:indole-3-glycerol-phosphate synthase activity"/>
    <property type="evidence" value="ECO:0007669"/>
    <property type="project" value="UniProtKB-UniRule"/>
</dbReference>
<dbReference type="GO" id="GO:0004640">
    <property type="term" value="F:phosphoribosylanthranilate isomerase activity"/>
    <property type="evidence" value="ECO:0007669"/>
    <property type="project" value="TreeGrafter"/>
</dbReference>
<dbReference type="GO" id="GO:0000162">
    <property type="term" value="P:L-tryptophan biosynthetic process"/>
    <property type="evidence" value="ECO:0007669"/>
    <property type="project" value="UniProtKB-UniRule"/>
</dbReference>
<dbReference type="CDD" id="cd00331">
    <property type="entry name" value="IGPS"/>
    <property type="match status" value="1"/>
</dbReference>
<dbReference type="Gene3D" id="3.20.20.70">
    <property type="entry name" value="Aldolase class I"/>
    <property type="match status" value="1"/>
</dbReference>
<dbReference type="HAMAP" id="MF_00134_A">
    <property type="entry name" value="IGPS_A"/>
    <property type="match status" value="1"/>
</dbReference>
<dbReference type="InterPro" id="IPR013785">
    <property type="entry name" value="Aldolase_TIM"/>
</dbReference>
<dbReference type="InterPro" id="IPR045186">
    <property type="entry name" value="Indole-3-glycerol_P_synth"/>
</dbReference>
<dbReference type="InterPro" id="IPR013798">
    <property type="entry name" value="Indole-3-glycerol_P_synth_dom"/>
</dbReference>
<dbReference type="InterPro" id="IPR001468">
    <property type="entry name" value="Indole-3-GlycerolPSynthase_CS"/>
</dbReference>
<dbReference type="InterPro" id="IPR011060">
    <property type="entry name" value="RibuloseP-bd_barrel"/>
</dbReference>
<dbReference type="NCBIfam" id="NF001374">
    <property type="entry name" value="PRK00278.2-1"/>
    <property type="match status" value="1"/>
</dbReference>
<dbReference type="PANTHER" id="PTHR22854:SF2">
    <property type="entry name" value="INDOLE-3-GLYCEROL-PHOSPHATE SYNTHASE"/>
    <property type="match status" value="1"/>
</dbReference>
<dbReference type="PANTHER" id="PTHR22854">
    <property type="entry name" value="TRYPTOPHAN BIOSYNTHESIS PROTEIN"/>
    <property type="match status" value="1"/>
</dbReference>
<dbReference type="Pfam" id="PF00218">
    <property type="entry name" value="IGPS"/>
    <property type="match status" value="1"/>
</dbReference>
<dbReference type="SUPFAM" id="SSF51366">
    <property type="entry name" value="Ribulose-phoshate binding barrel"/>
    <property type="match status" value="1"/>
</dbReference>
<dbReference type="PROSITE" id="PS00614">
    <property type="entry name" value="IGPS"/>
    <property type="match status" value="1"/>
</dbReference>
<name>TRPC_THEAC</name>
<reference key="1">
    <citation type="journal article" date="2000" name="Nature">
        <title>The genome sequence of the thermoacidophilic scavenger Thermoplasma acidophilum.</title>
        <authorList>
            <person name="Ruepp A."/>
            <person name="Graml W."/>
            <person name="Santos-Martinez M.-L."/>
            <person name="Koretke K.K."/>
            <person name="Volker C."/>
            <person name="Mewes H.-W."/>
            <person name="Frishman D."/>
            <person name="Stocker S."/>
            <person name="Lupas A.N."/>
            <person name="Baumeister W."/>
        </authorList>
    </citation>
    <scope>NUCLEOTIDE SEQUENCE [LARGE SCALE GENOMIC DNA]</scope>
    <source>
        <strain>ATCC 25905 / DSM 1728 / JCM 9062 / NBRC 15155 / AMRC-C165</strain>
    </source>
</reference>
<keyword id="KW-0028">Amino-acid biosynthesis</keyword>
<keyword id="KW-0057">Aromatic amino acid biosynthesis</keyword>
<keyword id="KW-0210">Decarboxylase</keyword>
<keyword id="KW-0456">Lyase</keyword>
<keyword id="KW-1185">Reference proteome</keyword>
<keyword id="KW-0822">Tryptophan biosynthesis</keyword>
<proteinExistence type="inferred from homology"/>
<evidence type="ECO:0000305" key="1"/>
<sequence>MNIEDIFANNRTRSCEYRRERRTVSLRRAIELCNGEGRRGLIAEYKRRSPSGFSTDEDISSYLSYVKMHRIAGLSILSEPTHFSGSFDDVTLAHRIGVPVLVKDFAPDDHFVESAYNAGGDAVLAILDFLPSEDVERIVRRSADLGMDVIEEYHDRKALKKFVDGDNVILGYNRRDLVSLKTGEDQDMPQYDITILESGINIDNVVHVDMRYSGFLIGTSILKRDGTLEYLEKNRII</sequence>
<comment type="catalytic activity">
    <reaction>
        <text>1-(2-carboxyphenylamino)-1-deoxy-D-ribulose 5-phosphate + H(+) = (1S,2R)-1-C-(indol-3-yl)glycerol 3-phosphate + CO2 + H2O</text>
        <dbReference type="Rhea" id="RHEA:23476"/>
        <dbReference type="ChEBI" id="CHEBI:15377"/>
        <dbReference type="ChEBI" id="CHEBI:15378"/>
        <dbReference type="ChEBI" id="CHEBI:16526"/>
        <dbReference type="ChEBI" id="CHEBI:58613"/>
        <dbReference type="ChEBI" id="CHEBI:58866"/>
        <dbReference type="EC" id="4.1.1.48"/>
    </reaction>
</comment>
<comment type="pathway">
    <text>Amino-acid biosynthesis; L-tryptophan biosynthesis; L-tryptophan from chorismate: step 4/5.</text>
</comment>
<comment type="similarity">
    <text evidence="1">Belongs to the TrpC family.</text>
</comment>
<organism>
    <name type="scientific">Thermoplasma acidophilum (strain ATCC 25905 / DSM 1728 / JCM 9062 / NBRC 15155 / AMRC-C165)</name>
    <dbReference type="NCBI Taxonomy" id="273075"/>
    <lineage>
        <taxon>Archaea</taxon>
        <taxon>Methanobacteriati</taxon>
        <taxon>Thermoplasmatota</taxon>
        <taxon>Thermoplasmata</taxon>
        <taxon>Thermoplasmatales</taxon>
        <taxon>Thermoplasmataceae</taxon>
        <taxon>Thermoplasma</taxon>
    </lineage>
</organism>
<accession>Q9HK02</accession>
<gene>
    <name type="primary">trpC</name>
    <name type="ordered locus">Ta0808</name>
</gene>
<protein>
    <recommendedName>
        <fullName>Indole-3-glycerol phosphate synthase</fullName>
        <shortName>IGPS</shortName>
        <ecNumber>4.1.1.48</ecNumber>
    </recommendedName>
</protein>
<feature type="chain" id="PRO_0000154304" description="Indole-3-glycerol phosphate synthase">
    <location>
        <begin position="1"/>
        <end position="237"/>
    </location>
</feature>